<protein>
    <recommendedName>
        <fullName>Protein SPA1-RELATED 4</fullName>
    </recommendedName>
</protein>
<feature type="chain" id="PRO_0000363494" description="Protein SPA1-RELATED 4">
    <location>
        <begin position="1"/>
        <end position="794"/>
    </location>
</feature>
<feature type="domain" description="Protein kinase" evidence="3">
    <location>
        <begin position="1"/>
        <end position="268"/>
    </location>
</feature>
<feature type="repeat" description="WD 1">
    <location>
        <begin position="482"/>
        <end position="521"/>
    </location>
</feature>
<feature type="repeat" description="WD 2">
    <location>
        <begin position="531"/>
        <end position="571"/>
    </location>
</feature>
<feature type="repeat" description="WD 3">
    <location>
        <begin position="574"/>
        <end position="614"/>
    </location>
</feature>
<feature type="repeat" description="WD 4">
    <location>
        <begin position="616"/>
        <end position="656"/>
    </location>
</feature>
<feature type="repeat" description="WD 5">
    <location>
        <begin position="660"/>
        <end position="698"/>
    </location>
</feature>
<feature type="repeat" description="WD 6">
    <location>
        <begin position="707"/>
        <end position="746"/>
    </location>
</feature>
<feature type="repeat" description="WD 7">
    <location>
        <begin position="762"/>
        <end position="794"/>
    </location>
</feature>
<feature type="region of interest" description="Disordered" evidence="4">
    <location>
        <begin position="126"/>
        <end position="165"/>
    </location>
</feature>
<feature type="region of interest" description="Disordered" evidence="4">
    <location>
        <begin position="352"/>
        <end position="373"/>
    </location>
</feature>
<feature type="region of interest" description="Disordered" evidence="4">
    <location>
        <begin position="428"/>
        <end position="447"/>
    </location>
</feature>
<feature type="coiled-coil region" evidence="2">
    <location>
        <begin position="272"/>
        <end position="326"/>
    </location>
</feature>
<feature type="short sequence motif" description="DWD box">
    <location>
        <begin position="635"/>
        <end position="649"/>
    </location>
</feature>
<feature type="compositionally biased region" description="Basic and acidic residues" evidence="4">
    <location>
        <begin position="136"/>
        <end position="165"/>
    </location>
</feature>
<feature type="compositionally biased region" description="Acidic residues" evidence="4">
    <location>
        <begin position="358"/>
        <end position="369"/>
    </location>
</feature>
<dbReference type="EMBL" id="AC022520">
    <property type="protein sequence ID" value="AAF87859.1"/>
    <property type="status" value="ALT_SEQ"/>
    <property type="molecule type" value="Genomic_DNA"/>
</dbReference>
<dbReference type="EMBL" id="CP002684">
    <property type="protein sequence ID" value="AEE32888.1"/>
    <property type="molecule type" value="Genomic_DNA"/>
</dbReference>
<dbReference type="EMBL" id="CP002684">
    <property type="protein sequence ID" value="AEE32889.1"/>
    <property type="molecule type" value="Genomic_DNA"/>
</dbReference>
<dbReference type="EMBL" id="CP002684">
    <property type="protein sequence ID" value="ANM59146.1"/>
    <property type="molecule type" value="Genomic_DNA"/>
</dbReference>
<dbReference type="EMBL" id="AY040023">
    <property type="protein sequence ID" value="AAK64180.1"/>
    <property type="molecule type" value="mRNA"/>
</dbReference>
<dbReference type="EMBL" id="AY133883">
    <property type="protein sequence ID" value="AAM91817.1"/>
    <property type="molecule type" value="mRNA"/>
</dbReference>
<dbReference type="PIR" id="E96571">
    <property type="entry name" value="E96571"/>
</dbReference>
<dbReference type="RefSeq" id="NP_001321533.1">
    <property type="nucleotide sequence ID" value="NM_001333576.1"/>
</dbReference>
<dbReference type="RefSeq" id="NP_175717.1">
    <property type="nucleotide sequence ID" value="NM_104188.4"/>
</dbReference>
<dbReference type="RefSeq" id="NP_849802.1">
    <property type="nucleotide sequence ID" value="NM_179471.2"/>
</dbReference>
<dbReference type="SMR" id="Q94BM7"/>
<dbReference type="BioGRID" id="26968">
    <property type="interactions" value="12"/>
</dbReference>
<dbReference type="FunCoup" id="Q94BM7">
    <property type="interactions" value="104"/>
</dbReference>
<dbReference type="IntAct" id="Q94BM7">
    <property type="interactions" value="4"/>
</dbReference>
<dbReference type="STRING" id="3702.Q94BM7"/>
<dbReference type="iPTMnet" id="Q94BM7"/>
<dbReference type="PaxDb" id="3702-AT1G53090.2"/>
<dbReference type="ProteomicsDB" id="232522"/>
<dbReference type="EnsemblPlants" id="AT1G53090.1">
    <property type="protein sequence ID" value="AT1G53090.1"/>
    <property type="gene ID" value="AT1G53090"/>
</dbReference>
<dbReference type="EnsemblPlants" id="AT1G53090.2">
    <property type="protein sequence ID" value="AT1G53090.2"/>
    <property type="gene ID" value="AT1G53090"/>
</dbReference>
<dbReference type="EnsemblPlants" id="AT1G53090.3">
    <property type="protein sequence ID" value="AT1G53090.3"/>
    <property type="gene ID" value="AT1G53090"/>
</dbReference>
<dbReference type="GeneID" id="841743"/>
<dbReference type="Gramene" id="AT1G53090.1">
    <property type="protein sequence ID" value="AT1G53090.1"/>
    <property type="gene ID" value="AT1G53090"/>
</dbReference>
<dbReference type="Gramene" id="AT1G53090.2">
    <property type="protein sequence ID" value="AT1G53090.2"/>
    <property type="gene ID" value="AT1G53090"/>
</dbReference>
<dbReference type="Gramene" id="AT1G53090.3">
    <property type="protein sequence ID" value="AT1G53090.3"/>
    <property type="gene ID" value="AT1G53090"/>
</dbReference>
<dbReference type="KEGG" id="ath:AT1G53090"/>
<dbReference type="Araport" id="AT1G53090"/>
<dbReference type="TAIR" id="AT1G53090">
    <property type="gene designation" value="SPA4"/>
</dbReference>
<dbReference type="eggNOG" id="KOG1033">
    <property type="taxonomic scope" value="Eukaryota"/>
</dbReference>
<dbReference type="HOGENOM" id="CLU_006994_1_1_1"/>
<dbReference type="InParanoid" id="Q94BM7"/>
<dbReference type="OMA" id="VHSFMGH"/>
<dbReference type="PhylomeDB" id="Q94BM7"/>
<dbReference type="PRO" id="PR:Q94BM7"/>
<dbReference type="Proteomes" id="UP000006548">
    <property type="component" value="Chromosome 1"/>
</dbReference>
<dbReference type="ExpressionAtlas" id="Q94BM7">
    <property type="expression patterns" value="baseline and differential"/>
</dbReference>
<dbReference type="GO" id="GO:0080008">
    <property type="term" value="C:Cul4-RING E3 ubiquitin ligase complex"/>
    <property type="evidence" value="ECO:0000250"/>
    <property type="project" value="TAIR"/>
</dbReference>
<dbReference type="GO" id="GO:0005634">
    <property type="term" value="C:nucleus"/>
    <property type="evidence" value="ECO:0007669"/>
    <property type="project" value="UniProtKB-SubCell"/>
</dbReference>
<dbReference type="GO" id="GO:0005524">
    <property type="term" value="F:ATP binding"/>
    <property type="evidence" value="ECO:0007669"/>
    <property type="project" value="InterPro"/>
</dbReference>
<dbReference type="GO" id="GO:0042802">
    <property type="term" value="F:identical protein binding"/>
    <property type="evidence" value="ECO:0000353"/>
    <property type="project" value="IntAct"/>
</dbReference>
<dbReference type="GO" id="GO:0004672">
    <property type="term" value="F:protein kinase activity"/>
    <property type="evidence" value="ECO:0007669"/>
    <property type="project" value="InterPro"/>
</dbReference>
<dbReference type="GO" id="GO:0009640">
    <property type="term" value="P:photomorphogenesis"/>
    <property type="evidence" value="ECO:0007669"/>
    <property type="project" value="InterPro"/>
</dbReference>
<dbReference type="GO" id="GO:0009585">
    <property type="term" value="P:red, far-red light phototransduction"/>
    <property type="evidence" value="ECO:0007669"/>
    <property type="project" value="UniProtKB-KW"/>
</dbReference>
<dbReference type="GO" id="GO:0009637">
    <property type="term" value="P:response to blue light"/>
    <property type="evidence" value="ECO:0000315"/>
    <property type="project" value="UniProtKB"/>
</dbReference>
<dbReference type="FunFam" id="2.130.10.10:FF:000090">
    <property type="entry name" value="E3 ubiquitin-protein ligase RFWD2 isoform X1"/>
    <property type="match status" value="1"/>
</dbReference>
<dbReference type="FunFam" id="1.10.510.10:FF:001017">
    <property type="entry name" value="SPA1-related 4"/>
    <property type="match status" value="1"/>
</dbReference>
<dbReference type="Gene3D" id="1.10.510.10">
    <property type="entry name" value="Transferase(Phosphotransferase) domain 1"/>
    <property type="match status" value="1"/>
</dbReference>
<dbReference type="Gene3D" id="2.130.10.10">
    <property type="entry name" value="YVTN repeat-like/Quinoprotein amine dehydrogenase"/>
    <property type="match status" value="1"/>
</dbReference>
<dbReference type="InterPro" id="IPR020472">
    <property type="entry name" value="G-protein_beta_WD-40_rep"/>
</dbReference>
<dbReference type="InterPro" id="IPR011009">
    <property type="entry name" value="Kinase-like_dom_sf"/>
</dbReference>
<dbReference type="InterPro" id="IPR000719">
    <property type="entry name" value="Prot_kinase_dom"/>
</dbReference>
<dbReference type="InterPro" id="IPR044630">
    <property type="entry name" value="SPA1/2/3/4"/>
</dbReference>
<dbReference type="InterPro" id="IPR015943">
    <property type="entry name" value="WD40/YVTN_repeat-like_dom_sf"/>
</dbReference>
<dbReference type="InterPro" id="IPR019775">
    <property type="entry name" value="WD40_repeat_CS"/>
</dbReference>
<dbReference type="InterPro" id="IPR036322">
    <property type="entry name" value="WD40_repeat_dom_sf"/>
</dbReference>
<dbReference type="InterPro" id="IPR001680">
    <property type="entry name" value="WD40_rpt"/>
</dbReference>
<dbReference type="PANTHER" id="PTHR44218">
    <property type="entry name" value="PROTEIN SPA1-RELATED 2"/>
    <property type="match status" value="1"/>
</dbReference>
<dbReference type="PANTHER" id="PTHR44218:SF17">
    <property type="entry name" value="PROTEIN SPA1-RELATED 4"/>
    <property type="match status" value="1"/>
</dbReference>
<dbReference type="Pfam" id="PF00400">
    <property type="entry name" value="WD40"/>
    <property type="match status" value="3"/>
</dbReference>
<dbReference type="PRINTS" id="PR00320">
    <property type="entry name" value="GPROTEINBRPT"/>
</dbReference>
<dbReference type="SMART" id="SM00220">
    <property type="entry name" value="S_TKc"/>
    <property type="match status" value="1"/>
</dbReference>
<dbReference type="SMART" id="SM00320">
    <property type="entry name" value="WD40"/>
    <property type="match status" value="7"/>
</dbReference>
<dbReference type="SUPFAM" id="SSF56112">
    <property type="entry name" value="Protein kinase-like (PK-like)"/>
    <property type="match status" value="1"/>
</dbReference>
<dbReference type="SUPFAM" id="SSF50978">
    <property type="entry name" value="WD40 repeat-like"/>
    <property type="match status" value="1"/>
</dbReference>
<dbReference type="PROSITE" id="PS50011">
    <property type="entry name" value="PROTEIN_KINASE_DOM"/>
    <property type="match status" value="1"/>
</dbReference>
<dbReference type="PROSITE" id="PS00678">
    <property type="entry name" value="WD_REPEATS_1"/>
    <property type="match status" value="1"/>
</dbReference>
<dbReference type="PROSITE" id="PS50082">
    <property type="entry name" value="WD_REPEATS_2"/>
    <property type="match status" value="2"/>
</dbReference>
<dbReference type="PROSITE" id="PS50294">
    <property type="entry name" value="WD_REPEATS_REGION"/>
    <property type="match status" value="1"/>
</dbReference>
<comment type="function">
    <text evidence="5 6 7">Repressor of photomorphogenesis in the light. Probably part of the COP1/SPA E3 ubiquitin-protein ligase complex.</text>
</comment>
<comment type="subunit">
    <text evidence="5 7 8">Interacts with COP1 and CO (PubMed:12887588, PubMed:16854975). Binds to CRY1 in response to blue light, this interaction prevents SPA1/COP1 complex formation and thus avoid COP1-dependent degradation of the transcription factor HY5 by the proteasome and promotes hypocotyl elongation (PubMed:21511871).</text>
</comment>
<comment type="interaction">
    <interactant intactId="EBI-626943">
        <id>Q94BM7</id>
    </interactant>
    <interactant intactId="EBI-1112154">
        <id>O50055</id>
        <label>COL1</label>
    </interactant>
    <organismsDiffer>false</organismsDiffer>
    <experiments>7</experiments>
</comment>
<comment type="interaction">
    <interactant intactId="EBI-626943">
        <id>Q94BM7</id>
    </interactant>
    <interactant intactId="EBI-301649">
        <id>P43254</id>
        <label>COP1</label>
    </interactant>
    <organismsDiffer>false</organismsDiffer>
    <experiments>14</experiments>
</comment>
<comment type="interaction">
    <interactant intactId="EBI-626943">
        <id>Q94BM7</id>
    </interactant>
    <interactant intactId="EBI-626992">
        <id>Q9SYX2</id>
        <label>SPA1</label>
    </interactant>
    <organismsDiffer>false</organismsDiffer>
    <experiments>9</experiments>
</comment>
<comment type="interaction">
    <interactant intactId="EBI-626943">
        <id>Q94BM7</id>
    </interactant>
    <interactant intactId="EBI-626921">
        <id>Q9LJR3</id>
        <label>SPA3</label>
    </interactant>
    <organismsDiffer>false</organismsDiffer>
    <experiments>6</experiments>
</comment>
<comment type="interaction">
    <interactant intactId="EBI-626943">
        <id>Q94BM7</id>
    </interactant>
    <interactant intactId="EBI-626943">
        <id>Q94BM7</id>
        <label>SPA4</label>
    </interactant>
    <organismsDiffer>false</organismsDiffer>
    <experiments>2</experiments>
</comment>
<comment type="subcellular location">
    <subcellularLocation>
        <location evidence="1">Nucleus</location>
    </subcellularLocation>
</comment>
<comment type="induction">
    <text evidence="6 7">Up-regulated by red, far-red and blue light.</text>
</comment>
<comment type="domain">
    <text evidence="3">The protein kinase domain is predicted to be catalytically inactive. The DWD box is required for interaction with DDB1A (By similarity).</text>
</comment>
<comment type="disruption phenotype">
    <text evidence="8">Reduced hypocotyl elongation in blue light.</text>
</comment>
<comment type="sequence caution" evidence="9">
    <conflict type="erroneous gene model prediction">
        <sequence resource="EMBL-CDS" id="AAF87859"/>
    </conflict>
</comment>
<accession>Q94BM7</accession>
<accession>Q9LNN4</accession>
<proteinExistence type="evidence at protein level"/>
<organism>
    <name type="scientific">Arabidopsis thaliana</name>
    <name type="common">Mouse-ear cress</name>
    <dbReference type="NCBI Taxonomy" id="3702"/>
    <lineage>
        <taxon>Eukaryota</taxon>
        <taxon>Viridiplantae</taxon>
        <taxon>Streptophyta</taxon>
        <taxon>Embryophyta</taxon>
        <taxon>Tracheophyta</taxon>
        <taxon>Spermatophyta</taxon>
        <taxon>Magnoliopsida</taxon>
        <taxon>eudicotyledons</taxon>
        <taxon>Gunneridae</taxon>
        <taxon>Pentapetalae</taxon>
        <taxon>rosids</taxon>
        <taxon>malvids</taxon>
        <taxon>Brassicales</taxon>
        <taxon>Brassicaceae</taxon>
        <taxon>Camelineae</taxon>
        <taxon>Arabidopsis</taxon>
    </lineage>
</organism>
<reference key="1">
    <citation type="journal article" date="2000" name="Nature">
        <title>Sequence and analysis of chromosome 1 of the plant Arabidopsis thaliana.</title>
        <authorList>
            <person name="Theologis A."/>
            <person name="Ecker J.R."/>
            <person name="Palm C.J."/>
            <person name="Federspiel N.A."/>
            <person name="Kaul S."/>
            <person name="White O."/>
            <person name="Alonso J."/>
            <person name="Altafi H."/>
            <person name="Araujo R."/>
            <person name="Bowman C.L."/>
            <person name="Brooks S.Y."/>
            <person name="Buehler E."/>
            <person name="Chan A."/>
            <person name="Chao Q."/>
            <person name="Chen H."/>
            <person name="Cheuk R.F."/>
            <person name="Chin C.W."/>
            <person name="Chung M.K."/>
            <person name="Conn L."/>
            <person name="Conway A.B."/>
            <person name="Conway A.R."/>
            <person name="Creasy T.H."/>
            <person name="Dewar K."/>
            <person name="Dunn P."/>
            <person name="Etgu P."/>
            <person name="Feldblyum T.V."/>
            <person name="Feng J.-D."/>
            <person name="Fong B."/>
            <person name="Fujii C.Y."/>
            <person name="Gill J.E."/>
            <person name="Goldsmith A.D."/>
            <person name="Haas B."/>
            <person name="Hansen N.F."/>
            <person name="Hughes B."/>
            <person name="Huizar L."/>
            <person name="Hunter J.L."/>
            <person name="Jenkins J."/>
            <person name="Johnson-Hopson C."/>
            <person name="Khan S."/>
            <person name="Khaykin E."/>
            <person name="Kim C.J."/>
            <person name="Koo H.L."/>
            <person name="Kremenetskaia I."/>
            <person name="Kurtz D.B."/>
            <person name="Kwan A."/>
            <person name="Lam B."/>
            <person name="Langin-Hooper S."/>
            <person name="Lee A."/>
            <person name="Lee J.M."/>
            <person name="Lenz C.A."/>
            <person name="Li J.H."/>
            <person name="Li Y.-P."/>
            <person name="Lin X."/>
            <person name="Liu S.X."/>
            <person name="Liu Z.A."/>
            <person name="Luros J.S."/>
            <person name="Maiti R."/>
            <person name="Marziali A."/>
            <person name="Militscher J."/>
            <person name="Miranda M."/>
            <person name="Nguyen M."/>
            <person name="Nierman W.C."/>
            <person name="Osborne B.I."/>
            <person name="Pai G."/>
            <person name="Peterson J."/>
            <person name="Pham P.K."/>
            <person name="Rizzo M."/>
            <person name="Rooney T."/>
            <person name="Rowley D."/>
            <person name="Sakano H."/>
            <person name="Salzberg S.L."/>
            <person name="Schwartz J.R."/>
            <person name="Shinn P."/>
            <person name="Southwick A.M."/>
            <person name="Sun H."/>
            <person name="Tallon L.J."/>
            <person name="Tambunga G."/>
            <person name="Toriumi M.J."/>
            <person name="Town C.D."/>
            <person name="Utterback T."/>
            <person name="Van Aken S."/>
            <person name="Vaysberg M."/>
            <person name="Vysotskaia V.S."/>
            <person name="Walker M."/>
            <person name="Wu D."/>
            <person name="Yu G."/>
            <person name="Fraser C.M."/>
            <person name="Venter J.C."/>
            <person name="Davis R.W."/>
        </authorList>
    </citation>
    <scope>NUCLEOTIDE SEQUENCE [LARGE SCALE GENOMIC DNA]</scope>
    <source>
        <strain>cv. Columbia</strain>
    </source>
</reference>
<reference key="2">
    <citation type="journal article" date="2017" name="Plant J.">
        <title>Araport11: a complete reannotation of the Arabidopsis thaliana reference genome.</title>
        <authorList>
            <person name="Cheng C.Y."/>
            <person name="Krishnakumar V."/>
            <person name="Chan A.P."/>
            <person name="Thibaud-Nissen F."/>
            <person name="Schobel S."/>
            <person name="Town C.D."/>
        </authorList>
    </citation>
    <scope>GENOME REANNOTATION</scope>
    <source>
        <strain>cv. Columbia</strain>
    </source>
</reference>
<reference key="3">
    <citation type="journal article" date="2003" name="Science">
        <title>Empirical analysis of transcriptional activity in the Arabidopsis genome.</title>
        <authorList>
            <person name="Yamada K."/>
            <person name="Lim J."/>
            <person name="Dale J.M."/>
            <person name="Chen H."/>
            <person name="Shinn P."/>
            <person name="Palm C.J."/>
            <person name="Southwick A.M."/>
            <person name="Wu H.C."/>
            <person name="Kim C.J."/>
            <person name="Nguyen M."/>
            <person name="Pham P.K."/>
            <person name="Cheuk R.F."/>
            <person name="Karlin-Newmann G."/>
            <person name="Liu S.X."/>
            <person name="Lam B."/>
            <person name="Sakano H."/>
            <person name="Wu T."/>
            <person name="Yu G."/>
            <person name="Miranda M."/>
            <person name="Quach H.L."/>
            <person name="Tripp M."/>
            <person name="Chang C.H."/>
            <person name="Lee J.M."/>
            <person name="Toriumi M.J."/>
            <person name="Chan M.M."/>
            <person name="Tang C.C."/>
            <person name="Onodera C.S."/>
            <person name="Deng J.M."/>
            <person name="Akiyama K."/>
            <person name="Ansari Y."/>
            <person name="Arakawa T."/>
            <person name="Banh J."/>
            <person name="Banno F."/>
            <person name="Bowser L."/>
            <person name="Brooks S.Y."/>
            <person name="Carninci P."/>
            <person name="Chao Q."/>
            <person name="Choy N."/>
            <person name="Enju A."/>
            <person name="Goldsmith A.D."/>
            <person name="Gurjal M."/>
            <person name="Hansen N.F."/>
            <person name="Hayashizaki Y."/>
            <person name="Johnson-Hopson C."/>
            <person name="Hsuan V.W."/>
            <person name="Iida K."/>
            <person name="Karnes M."/>
            <person name="Khan S."/>
            <person name="Koesema E."/>
            <person name="Ishida J."/>
            <person name="Jiang P.X."/>
            <person name="Jones T."/>
            <person name="Kawai J."/>
            <person name="Kamiya A."/>
            <person name="Meyers C."/>
            <person name="Nakajima M."/>
            <person name="Narusaka M."/>
            <person name="Seki M."/>
            <person name="Sakurai T."/>
            <person name="Satou M."/>
            <person name="Tamse R."/>
            <person name="Vaysberg M."/>
            <person name="Wallender E.K."/>
            <person name="Wong C."/>
            <person name="Yamamura Y."/>
            <person name="Yuan S."/>
            <person name="Shinozaki K."/>
            <person name="Davis R.W."/>
            <person name="Theologis A."/>
            <person name="Ecker J.R."/>
        </authorList>
    </citation>
    <scope>NUCLEOTIDE SEQUENCE [LARGE SCALE MRNA]</scope>
    <source>
        <strain>cv. Columbia</strain>
    </source>
</reference>
<reference key="4">
    <citation type="journal article" date="2003" name="Plant J.">
        <title>The SPA1-like proteins SPA3 and SPA4 repress photomorphogenesis in the light.</title>
        <authorList>
            <person name="Laubinger S."/>
            <person name="Hoecker U."/>
        </authorList>
    </citation>
    <scope>FUNCTION</scope>
    <scope>INTERACTION WITH COP1</scope>
    <scope>GENE FAMILY</scope>
    <scope>NOMENCLATURE</scope>
</reference>
<reference key="5">
    <citation type="journal article" date="2004" name="Plant Cell">
        <title>The SPA quartet: a family of WD-repeat proteins with a central role in suppression of photomorphogenesis in Arabidopsis.</title>
        <authorList>
            <person name="Laubinger S."/>
            <person name="Fittinghoff K."/>
            <person name="Hoecker U."/>
        </authorList>
    </citation>
    <scope>GENE FAMILY</scope>
    <scope>NOMENCLATURE</scope>
</reference>
<reference key="6">
    <citation type="journal article" date="2006" name="Plant J.">
        <title>Functional and expression analysis of Arabidopsis SPA genes during seedling photomorphogenesis and adult growth.</title>
        <authorList>
            <person name="Fittinghoff K."/>
            <person name="Laubinger S."/>
            <person name="Nixdorf M."/>
            <person name="Fackendahl P."/>
            <person name="Baumgardt R.-L."/>
            <person name="Batschauer A."/>
            <person name="Hoecker U."/>
        </authorList>
    </citation>
    <scope>FUNCTION</scope>
    <scope>INDUCTION BY LIGHT</scope>
</reference>
<reference key="7">
    <citation type="journal article" date="2006" name="Development">
        <title>Arabidopsis SPA proteins regulate photoperiodic flowering and interact with the floral inducer CONSTANS to regulate its stability.</title>
        <authorList>
            <person name="Laubinger S."/>
            <person name="Marchal V."/>
            <person name="Le Gourrierec J."/>
            <person name="Wenkel S."/>
            <person name="Adrian J."/>
            <person name="Jang S."/>
            <person name="Kulajta C."/>
            <person name="Braun H."/>
            <person name="Coupland G."/>
            <person name="Hoecker U."/>
        </authorList>
    </citation>
    <scope>FUNCTION</scope>
    <scope>INTERACTION WITH CO</scope>
    <scope>INDUCTION</scope>
</reference>
<reference key="8">
    <citation type="journal article" date="2008" name="Plant Cell">
        <title>Characterization of Arabidopsis and rice DWD proteins and their roles as substrate receptors for CUL4-RING E3 ubiquitin ligases.</title>
        <authorList>
            <person name="Lee J.H."/>
            <person name="Terzaghi W."/>
            <person name="Gusmaroli G."/>
            <person name="Charron J.B."/>
            <person name="Yoon H.J."/>
            <person name="Chen H."/>
            <person name="He Y.J."/>
            <person name="Xiong Y."/>
            <person name="Deng X.W."/>
        </authorList>
    </citation>
    <scope>DWD MOTIF</scope>
</reference>
<reference key="9">
    <citation type="journal article" date="2011" name="Genes Dev.">
        <title>Arabidopsis cryptochrome 1 interacts with SPA1 to suppress COP1 activity in response to blue light.</title>
        <authorList>
            <person name="Liu B."/>
            <person name="Zuo Z."/>
            <person name="Liu H."/>
            <person name="Liu X."/>
            <person name="Lin C."/>
        </authorList>
    </citation>
    <scope>INTERACTION WITH CRY1</scope>
    <scope>DISRUPTION PHENOTYPE</scope>
</reference>
<name>SPA4_ARATH</name>
<sequence>MKGSSESSSRGLNNTSGVSEFCTDGSKSLSHIDYVRSLLGSHKEANLGGLDDDSIVRALECEDVSLRQWLDNPDRSVDAFECFHVFRQIVEIVNAAHSQGIVVHNVRPSCFVMSSFNNVSFIESASCSDSGSDEDATTKSREIGSSRQEEILSERRSKQQEEVKKQPFPMKQILAMEMSWYTSHEEDNGSLCNCASDIYRLGVLLFELFCPVSSREEKSRTMSSLRHRVLPPQILLNWPKEASFCLWLLHPEPSCRPSMSELLQSEFINEPRENLEEREAAMELRDRIEEQELLLEFLFLIQQRKQEAADKLQDTISLLSSDIDQVVKRQLVLQQKGRDVRSFLASRKRIRQGAETTAAEEENDDNSIDEESKLDDTLESTLLESSRLMRNLKKLESVYFATRYRQIKAATAAEKPLARYYSALSCNGRSSEKSSMSQPSKDPINDSRQGGWIDPFLEGLCKYLSFSKLRVKADLKQGDLLNSSNLVCAIGFDRDGEFFATAGVNKKIKIFECESIIKDGRDIHYPVVELASRSKLSGICWNSYIKSQVASSNFEGVVQVWDVARNQLVTEMKEHEKRVWSIDYSSADPTLLASGSDDGSVKLWSINQGVSIGTIKTKANICCVQFPSETGRSLAFGSADHKVYYYDLRNPKLPLCTMIGHHKTVSYVRFVDSSTLVSSSTDNTLKLWDLSMSISGINETPLHSFMGHTNVKNFVGLSVSDGYIATGSETNEVFVYHKAFPMPVLSYKFKTIDPVSELEVDDASQFISSVCWRGQSSTLVAANSTGNIKILEMV</sequence>
<evidence type="ECO:0000250" key="1"/>
<evidence type="ECO:0000255" key="2"/>
<evidence type="ECO:0000255" key="3">
    <source>
        <dbReference type="PROSITE-ProRule" id="PRU00159"/>
    </source>
</evidence>
<evidence type="ECO:0000256" key="4">
    <source>
        <dbReference type="SAM" id="MobiDB-lite"/>
    </source>
</evidence>
<evidence type="ECO:0000269" key="5">
    <source>
    </source>
</evidence>
<evidence type="ECO:0000269" key="6">
    <source>
    </source>
</evidence>
<evidence type="ECO:0000269" key="7">
    <source>
    </source>
</evidence>
<evidence type="ECO:0000269" key="8">
    <source>
    </source>
</evidence>
<evidence type="ECO:0000305" key="9"/>
<gene>
    <name type="primary">SPA4</name>
    <name type="ordered locus">At1g53090</name>
    <name type="ORF">F8L10.5</name>
</gene>
<keyword id="KW-0175">Coiled coil</keyword>
<keyword id="KW-0547">Nucleotide-binding</keyword>
<keyword id="KW-0539">Nucleus</keyword>
<keyword id="KW-0607">Phytochrome signaling pathway</keyword>
<keyword id="KW-1185">Reference proteome</keyword>
<keyword id="KW-0677">Repeat</keyword>
<keyword id="KW-0808">Transferase</keyword>
<keyword id="KW-0833">Ubl conjugation pathway</keyword>
<keyword id="KW-0853">WD repeat</keyword>